<dbReference type="EC" id="6.3.2.1" evidence="1"/>
<dbReference type="EC" id="2.7.4.25" evidence="1"/>
<dbReference type="EMBL" id="BX548175">
    <property type="protein sequence ID" value="CAE21864.1"/>
    <property type="molecule type" value="Genomic_DNA"/>
</dbReference>
<dbReference type="SMR" id="Q7V583"/>
<dbReference type="KEGG" id="pmt:PMT_1689"/>
<dbReference type="eggNOG" id="COG0283">
    <property type="taxonomic scope" value="Bacteria"/>
</dbReference>
<dbReference type="eggNOG" id="COG0414">
    <property type="taxonomic scope" value="Bacteria"/>
</dbReference>
<dbReference type="HOGENOM" id="CLU_037427_0_0_3"/>
<dbReference type="UniPathway" id="UPA00028">
    <property type="reaction ID" value="UER00005"/>
</dbReference>
<dbReference type="Proteomes" id="UP000001423">
    <property type="component" value="Chromosome"/>
</dbReference>
<dbReference type="GO" id="GO:0005829">
    <property type="term" value="C:cytosol"/>
    <property type="evidence" value="ECO:0007669"/>
    <property type="project" value="TreeGrafter"/>
</dbReference>
<dbReference type="GO" id="GO:0005524">
    <property type="term" value="F:ATP binding"/>
    <property type="evidence" value="ECO:0007669"/>
    <property type="project" value="UniProtKB-UniRule"/>
</dbReference>
<dbReference type="GO" id="GO:0036430">
    <property type="term" value="F:CMP kinase activity"/>
    <property type="evidence" value="ECO:0007669"/>
    <property type="project" value="RHEA"/>
</dbReference>
<dbReference type="GO" id="GO:0036431">
    <property type="term" value="F:dCMP kinase activity"/>
    <property type="evidence" value="ECO:0007669"/>
    <property type="project" value="RHEA"/>
</dbReference>
<dbReference type="GO" id="GO:0004592">
    <property type="term" value="F:pantoate-beta-alanine ligase activity"/>
    <property type="evidence" value="ECO:0007669"/>
    <property type="project" value="UniProtKB-UniRule"/>
</dbReference>
<dbReference type="GO" id="GO:0015949">
    <property type="term" value="P:nucleobase-containing small molecule interconversion"/>
    <property type="evidence" value="ECO:0007669"/>
    <property type="project" value="TreeGrafter"/>
</dbReference>
<dbReference type="GO" id="GO:0015940">
    <property type="term" value="P:pantothenate biosynthetic process"/>
    <property type="evidence" value="ECO:0007669"/>
    <property type="project" value="UniProtKB-UniRule"/>
</dbReference>
<dbReference type="GO" id="GO:0006220">
    <property type="term" value="P:pyrimidine nucleotide metabolic process"/>
    <property type="evidence" value="ECO:0007669"/>
    <property type="project" value="UniProtKB-UniRule"/>
</dbReference>
<dbReference type="CDD" id="cd02020">
    <property type="entry name" value="CMPK"/>
    <property type="match status" value="1"/>
</dbReference>
<dbReference type="CDD" id="cd00560">
    <property type="entry name" value="PanC"/>
    <property type="match status" value="1"/>
</dbReference>
<dbReference type="Gene3D" id="3.40.50.620">
    <property type="entry name" value="HUPs"/>
    <property type="match status" value="1"/>
</dbReference>
<dbReference type="Gene3D" id="3.40.50.300">
    <property type="entry name" value="P-loop containing nucleotide triphosphate hydrolases"/>
    <property type="match status" value="1"/>
</dbReference>
<dbReference type="Gene3D" id="3.30.1300.10">
    <property type="entry name" value="Pantoate-beta-alanine ligase, C-terminal domain"/>
    <property type="match status" value="1"/>
</dbReference>
<dbReference type="HAMAP" id="MF_00238">
    <property type="entry name" value="Cytidyl_kinase_type1"/>
    <property type="match status" value="1"/>
</dbReference>
<dbReference type="HAMAP" id="MF_00158">
    <property type="entry name" value="PanC"/>
    <property type="match status" value="1"/>
</dbReference>
<dbReference type="HAMAP" id="MF_01349">
    <property type="entry name" value="PanCY"/>
    <property type="match status" value="1"/>
</dbReference>
<dbReference type="InterPro" id="IPR003136">
    <property type="entry name" value="Cytidylate_kin"/>
</dbReference>
<dbReference type="InterPro" id="IPR011994">
    <property type="entry name" value="Cytidylate_kinase_dom"/>
</dbReference>
<dbReference type="InterPro" id="IPR027417">
    <property type="entry name" value="P-loop_NTPase"/>
</dbReference>
<dbReference type="InterPro" id="IPR003721">
    <property type="entry name" value="Pantoate_ligase"/>
</dbReference>
<dbReference type="InterPro" id="IPR024894">
    <property type="entry name" value="Pantoate_ligase/cytidylate_kin"/>
</dbReference>
<dbReference type="InterPro" id="IPR042176">
    <property type="entry name" value="Pantoate_ligase_C"/>
</dbReference>
<dbReference type="InterPro" id="IPR014729">
    <property type="entry name" value="Rossmann-like_a/b/a_fold"/>
</dbReference>
<dbReference type="NCBIfam" id="TIGR00017">
    <property type="entry name" value="cmk"/>
    <property type="match status" value="1"/>
</dbReference>
<dbReference type="NCBIfam" id="TIGR00018">
    <property type="entry name" value="panC"/>
    <property type="match status" value="1"/>
</dbReference>
<dbReference type="NCBIfam" id="NF010004">
    <property type="entry name" value="PRK13477.1"/>
    <property type="match status" value="1"/>
</dbReference>
<dbReference type="PANTHER" id="PTHR21299:SF2">
    <property type="entry name" value="CYTIDYLATE KINASE"/>
    <property type="match status" value="1"/>
</dbReference>
<dbReference type="PANTHER" id="PTHR21299">
    <property type="entry name" value="CYTIDYLATE KINASE/PANTOATE-BETA-ALANINE LIGASE"/>
    <property type="match status" value="1"/>
</dbReference>
<dbReference type="Pfam" id="PF02224">
    <property type="entry name" value="Cytidylate_kin"/>
    <property type="match status" value="1"/>
</dbReference>
<dbReference type="Pfam" id="PF02569">
    <property type="entry name" value="Pantoate_ligase"/>
    <property type="match status" value="1"/>
</dbReference>
<dbReference type="SUPFAM" id="SSF52374">
    <property type="entry name" value="Nucleotidylyl transferase"/>
    <property type="match status" value="1"/>
</dbReference>
<dbReference type="SUPFAM" id="SSF52540">
    <property type="entry name" value="P-loop containing nucleoside triphosphate hydrolases"/>
    <property type="match status" value="1"/>
</dbReference>
<organism>
    <name type="scientific">Prochlorococcus marinus (strain MIT 9313)</name>
    <dbReference type="NCBI Taxonomy" id="74547"/>
    <lineage>
        <taxon>Bacteria</taxon>
        <taxon>Bacillati</taxon>
        <taxon>Cyanobacteriota</taxon>
        <taxon>Cyanophyceae</taxon>
        <taxon>Synechococcales</taxon>
        <taxon>Prochlorococcaceae</taxon>
        <taxon>Prochlorococcus</taxon>
    </lineage>
</organism>
<proteinExistence type="inferred from homology"/>
<evidence type="ECO:0000255" key="1">
    <source>
        <dbReference type="HAMAP-Rule" id="MF_01349"/>
    </source>
</evidence>
<sequence length="505" mass="55363">MHQWRKHQQSSVHFVPTMGALHRGHGQLIKSVHGFGRLQPAAVLVSVFVNPLQFGPAEDFDSYPRDLEADCELASRSGASALWAPSVDQVFPGGASSHFRIQVPSHLQAHLCGASRPGHFDGVVTVVARLLALVRPEVLVLGEKDWQQLVILRHLVAQLGLPVRVHGIATVRDDDGLACSSRNRYLMTQQRQQALALPQLLARAARESQDGRAVDLAGLRCAWEQLGLEVEYVEKVDAFNLQPLHAGRKLCLLAAAVRCGETRLIDHTFLMSRQPIVAIDGPAGAGKSTVTRAFAERLGLLYLDTGAMYRAVTWLTQQHDVDPHDPVAVKTILENLELELEPSQSGAQTVRINGHDVTEAIRSPEVTSSVSVVAAHGCVRKALTAQQQRMGVRGGLVAEGRDIGTAVFPDAELKVFLTASPAERARRRALDLDNRGFPVPDLAELETQIEERDRMDSTREVAPLRQAEDATELISDGMTIEEVIETLIDLFRVQVPEEVWPTAGR</sequence>
<reference key="1">
    <citation type="journal article" date="2003" name="Nature">
        <title>Genome divergence in two Prochlorococcus ecotypes reflects oceanic niche differentiation.</title>
        <authorList>
            <person name="Rocap G."/>
            <person name="Larimer F.W."/>
            <person name="Lamerdin J.E."/>
            <person name="Malfatti S."/>
            <person name="Chain P."/>
            <person name="Ahlgren N.A."/>
            <person name="Arellano A."/>
            <person name="Coleman M."/>
            <person name="Hauser L."/>
            <person name="Hess W.R."/>
            <person name="Johnson Z.I."/>
            <person name="Land M.L."/>
            <person name="Lindell D."/>
            <person name="Post A.F."/>
            <person name="Regala W."/>
            <person name="Shah M."/>
            <person name="Shaw S.L."/>
            <person name="Steglich C."/>
            <person name="Sullivan M.B."/>
            <person name="Ting C.S."/>
            <person name="Tolonen A."/>
            <person name="Webb E.A."/>
            <person name="Zinser E.R."/>
            <person name="Chisholm S.W."/>
        </authorList>
    </citation>
    <scope>NUCLEOTIDE SEQUENCE [LARGE SCALE GENOMIC DNA]</scope>
    <source>
        <strain>MIT 9313</strain>
    </source>
</reference>
<comment type="function">
    <text evidence="1">Catalyzes the condensation of pantoate with beta-alanine in an ATP-dependent reaction via a pantoyl-adenylate intermediate.</text>
</comment>
<comment type="function">
    <text evidence="1">Catalyzes the transfer of a phosphate group from ATP to either CMP or dCMP to form CDP or dCDP and ADP, respectively.</text>
</comment>
<comment type="catalytic activity">
    <reaction evidence="1">
        <text>(R)-pantoate + beta-alanine + ATP = (R)-pantothenate + AMP + diphosphate + H(+)</text>
        <dbReference type="Rhea" id="RHEA:10912"/>
        <dbReference type="ChEBI" id="CHEBI:15378"/>
        <dbReference type="ChEBI" id="CHEBI:15980"/>
        <dbReference type="ChEBI" id="CHEBI:29032"/>
        <dbReference type="ChEBI" id="CHEBI:30616"/>
        <dbReference type="ChEBI" id="CHEBI:33019"/>
        <dbReference type="ChEBI" id="CHEBI:57966"/>
        <dbReference type="ChEBI" id="CHEBI:456215"/>
        <dbReference type="EC" id="6.3.2.1"/>
    </reaction>
</comment>
<comment type="catalytic activity">
    <reaction evidence="1">
        <text>CMP + ATP = CDP + ADP</text>
        <dbReference type="Rhea" id="RHEA:11600"/>
        <dbReference type="ChEBI" id="CHEBI:30616"/>
        <dbReference type="ChEBI" id="CHEBI:58069"/>
        <dbReference type="ChEBI" id="CHEBI:60377"/>
        <dbReference type="ChEBI" id="CHEBI:456216"/>
        <dbReference type="EC" id="2.7.4.25"/>
    </reaction>
</comment>
<comment type="catalytic activity">
    <reaction evidence="1">
        <text>dCMP + ATP = dCDP + ADP</text>
        <dbReference type="Rhea" id="RHEA:25094"/>
        <dbReference type="ChEBI" id="CHEBI:30616"/>
        <dbReference type="ChEBI" id="CHEBI:57566"/>
        <dbReference type="ChEBI" id="CHEBI:58593"/>
        <dbReference type="ChEBI" id="CHEBI:456216"/>
        <dbReference type="EC" id="2.7.4.25"/>
    </reaction>
</comment>
<comment type="pathway">
    <text evidence="1">Cofactor biosynthesis; (R)-pantothenate biosynthesis; (R)-pantothenate from (R)-pantoate and beta-alanine: step 1/1.</text>
</comment>
<comment type="subcellular location">
    <subcellularLocation>
        <location evidence="1">Cytoplasm</location>
    </subcellularLocation>
</comment>
<comment type="similarity">
    <text evidence="1">In the N-terminal section; belongs to the pantothenate synthetase family.</text>
</comment>
<comment type="similarity">
    <text evidence="1">In the C-terminal section; belongs to the cytidylate kinase family. Type 1 subfamily.</text>
</comment>
<gene>
    <name evidence="1" type="primary">panC/cmk</name>
    <name type="ordered locus">PMT_1689</name>
</gene>
<accession>Q7V583</accession>
<keyword id="KW-0067">ATP-binding</keyword>
<keyword id="KW-0963">Cytoplasm</keyword>
<keyword id="KW-0418">Kinase</keyword>
<keyword id="KW-0436">Ligase</keyword>
<keyword id="KW-0511">Multifunctional enzyme</keyword>
<keyword id="KW-0547">Nucleotide-binding</keyword>
<keyword id="KW-0566">Pantothenate biosynthesis</keyword>
<keyword id="KW-1185">Reference proteome</keyword>
<keyword id="KW-0808">Transferase</keyword>
<feature type="chain" id="PRO_0000239791" description="Bifunctional pantoate ligase/cytidylate kinase">
    <location>
        <begin position="1"/>
        <end position="505"/>
    </location>
</feature>
<feature type="region of interest" description="Pantoate--beta-alanine ligase" evidence="1">
    <location>
        <begin position="1"/>
        <end position="268"/>
    </location>
</feature>
<feature type="region of interest" description="Cytidylate kinase" evidence="1">
    <location>
        <begin position="269"/>
        <end position="505"/>
    </location>
</feature>
<feature type="active site" description="Proton donor" evidence="1">
    <location>
        <position position="25"/>
    </location>
</feature>
<feature type="binding site" evidence="1">
    <location>
        <begin position="18"/>
        <end position="25"/>
    </location>
    <ligand>
        <name>ATP</name>
        <dbReference type="ChEBI" id="CHEBI:30616"/>
    </ligand>
</feature>
<feature type="binding site" evidence="1">
    <location>
        <position position="53"/>
    </location>
    <ligand>
        <name>(R)-pantoate</name>
        <dbReference type="ChEBI" id="CHEBI:15980"/>
    </ligand>
</feature>
<feature type="binding site" evidence="1">
    <location>
        <position position="53"/>
    </location>
    <ligand>
        <name>beta-alanine</name>
        <dbReference type="ChEBI" id="CHEBI:57966"/>
    </ligand>
</feature>
<feature type="binding site" evidence="1">
    <location>
        <begin position="142"/>
        <end position="145"/>
    </location>
    <ligand>
        <name>ATP</name>
        <dbReference type="ChEBI" id="CHEBI:30616"/>
    </ligand>
</feature>
<feature type="binding site" evidence="1">
    <location>
        <position position="148"/>
    </location>
    <ligand>
        <name>(R)-pantoate</name>
        <dbReference type="ChEBI" id="CHEBI:15980"/>
    </ligand>
</feature>
<feature type="binding site" evidence="1">
    <location>
        <position position="171"/>
    </location>
    <ligand>
        <name>ATP</name>
        <dbReference type="ChEBI" id="CHEBI:30616"/>
    </ligand>
</feature>
<feature type="binding site" evidence="1">
    <location>
        <begin position="179"/>
        <end position="182"/>
    </location>
    <ligand>
        <name>ATP</name>
        <dbReference type="ChEBI" id="CHEBI:30616"/>
    </ligand>
</feature>
<protein>
    <recommendedName>
        <fullName evidence="1">Bifunctional pantoate ligase/cytidylate kinase</fullName>
    </recommendedName>
    <domain>
        <recommendedName>
            <fullName evidence="1">Pantothenate synthetase</fullName>
            <shortName evidence="1">PS</shortName>
            <ecNumber evidence="1">6.3.2.1</ecNumber>
        </recommendedName>
        <alternativeName>
            <fullName evidence="1">Pantoate--beta-alanine ligase</fullName>
        </alternativeName>
        <alternativeName>
            <fullName evidence="1">Pantoate-activating enzyme</fullName>
        </alternativeName>
    </domain>
    <domain>
        <recommendedName>
            <fullName evidence="1">Cytidylate kinase</fullName>
            <shortName evidence="1">CK</shortName>
            <ecNumber evidence="1">2.7.4.25</ecNumber>
        </recommendedName>
        <alternativeName>
            <fullName evidence="1">Cytidine monophosphate kinase</fullName>
            <shortName evidence="1">CMP kinase</shortName>
        </alternativeName>
    </domain>
</protein>
<name>PANCY_PROMM</name>